<sequence length="177" mass="18927">MSRVAKAPVVIPAGVEVKLNGQVISIKGKNGELTRTVHSAVEVKQEENTLTFAPREGAVDGWAQAGTTRALLNSMVIGVTEGFTKKLQLVGVGYRAAVKGNVVNLALGFSHPVDHELPAGITAECPTQTEIVLKGADKQVIGQVAADLRAYRRPEPYKGKGVRYADEVVRTKEAKKK</sequence>
<gene>
    <name evidence="1" type="primary">rplF</name>
    <name type="ordered locus">YPA_3248</name>
</gene>
<dbReference type="EMBL" id="CP000308">
    <property type="protein sequence ID" value="ABG15210.1"/>
    <property type="molecule type" value="Genomic_DNA"/>
</dbReference>
<dbReference type="RefSeq" id="WP_002213334.1">
    <property type="nucleotide sequence ID" value="NZ_CP009906.1"/>
</dbReference>
<dbReference type="SMR" id="Q1C2W2"/>
<dbReference type="GeneID" id="96663181"/>
<dbReference type="KEGG" id="ypa:YPA_3248"/>
<dbReference type="Proteomes" id="UP000001971">
    <property type="component" value="Chromosome"/>
</dbReference>
<dbReference type="GO" id="GO:0022625">
    <property type="term" value="C:cytosolic large ribosomal subunit"/>
    <property type="evidence" value="ECO:0007669"/>
    <property type="project" value="TreeGrafter"/>
</dbReference>
<dbReference type="GO" id="GO:0019843">
    <property type="term" value="F:rRNA binding"/>
    <property type="evidence" value="ECO:0007669"/>
    <property type="project" value="UniProtKB-UniRule"/>
</dbReference>
<dbReference type="GO" id="GO:0003735">
    <property type="term" value="F:structural constituent of ribosome"/>
    <property type="evidence" value="ECO:0007669"/>
    <property type="project" value="InterPro"/>
</dbReference>
<dbReference type="GO" id="GO:0002181">
    <property type="term" value="P:cytoplasmic translation"/>
    <property type="evidence" value="ECO:0007669"/>
    <property type="project" value="TreeGrafter"/>
</dbReference>
<dbReference type="FunFam" id="3.90.930.12:FF:000001">
    <property type="entry name" value="50S ribosomal protein L6"/>
    <property type="match status" value="1"/>
</dbReference>
<dbReference type="FunFam" id="3.90.930.12:FF:000002">
    <property type="entry name" value="50S ribosomal protein L6"/>
    <property type="match status" value="1"/>
</dbReference>
<dbReference type="Gene3D" id="3.90.930.12">
    <property type="entry name" value="Ribosomal protein L6, alpha-beta domain"/>
    <property type="match status" value="2"/>
</dbReference>
<dbReference type="HAMAP" id="MF_01365_B">
    <property type="entry name" value="Ribosomal_uL6_B"/>
    <property type="match status" value="1"/>
</dbReference>
<dbReference type="InterPro" id="IPR000702">
    <property type="entry name" value="Ribosomal_uL6-like"/>
</dbReference>
<dbReference type="InterPro" id="IPR036789">
    <property type="entry name" value="Ribosomal_uL6-like_a/b-dom_sf"/>
</dbReference>
<dbReference type="InterPro" id="IPR020040">
    <property type="entry name" value="Ribosomal_uL6_a/b-dom"/>
</dbReference>
<dbReference type="InterPro" id="IPR019906">
    <property type="entry name" value="Ribosomal_uL6_bac-type"/>
</dbReference>
<dbReference type="InterPro" id="IPR002358">
    <property type="entry name" value="Ribosomal_uL6_CS"/>
</dbReference>
<dbReference type="NCBIfam" id="TIGR03654">
    <property type="entry name" value="L6_bact"/>
    <property type="match status" value="1"/>
</dbReference>
<dbReference type="PANTHER" id="PTHR11655">
    <property type="entry name" value="60S/50S RIBOSOMAL PROTEIN L6/L9"/>
    <property type="match status" value="1"/>
</dbReference>
<dbReference type="PANTHER" id="PTHR11655:SF14">
    <property type="entry name" value="LARGE RIBOSOMAL SUBUNIT PROTEIN UL6M"/>
    <property type="match status" value="1"/>
</dbReference>
<dbReference type="Pfam" id="PF00347">
    <property type="entry name" value="Ribosomal_L6"/>
    <property type="match status" value="2"/>
</dbReference>
<dbReference type="PIRSF" id="PIRSF002162">
    <property type="entry name" value="Ribosomal_L6"/>
    <property type="match status" value="1"/>
</dbReference>
<dbReference type="PRINTS" id="PR00059">
    <property type="entry name" value="RIBOSOMALL6"/>
</dbReference>
<dbReference type="SUPFAM" id="SSF56053">
    <property type="entry name" value="Ribosomal protein L6"/>
    <property type="match status" value="2"/>
</dbReference>
<dbReference type="PROSITE" id="PS00525">
    <property type="entry name" value="RIBOSOMAL_L6_1"/>
    <property type="match status" value="1"/>
</dbReference>
<keyword id="KW-0687">Ribonucleoprotein</keyword>
<keyword id="KW-0689">Ribosomal protein</keyword>
<keyword id="KW-0694">RNA-binding</keyword>
<keyword id="KW-0699">rRNA-binding</keyword>
<evidence type="ECO:0000255" key="1">
    <source>
        <dbReference type="HAMAP-Rule" id="MF_01365"/>
    </source>
</evidence>
<evidence type="ECO:0000305" key="2"/>
<organism>
    <name type="scientific">Yersinia pestis bv. Antiqua (strain Antiqua)</name>
    <dbReference type="NCBI Taxonomy" id="360102"/>
    <lineage>
        <taxon>Bacteria</taxon>
        <taxon>Pseudomonadati</taxon>
        <taxon>Pseudomonadota</taxon>
        <taxon>Gammaproteobacteria</taxon>
        <taxon>Enterobacterales</taxon>
        <taxon>Yersiniaceae</taxon>
        <taxon>Yersinia</taxon>
    </lineage>
</organism>
<proteinExistence type="inferred from homology"/>
<accession>Q1C2W2</accession>
<protein>
    <recommendedName>
        <fullName evidence="1">Large ribosomal subunit protein uL6</fullName>
    </recommendedName>
    <alternativeName>
        <fullName evidence="2">50S ribosomal protein L6</fullName>
    </alternativeName>
</protein>
<reference key="1">
    <citation type="journal article" date="2006" name="J. Bacteriol.">
        <title>Complete genome sequence of Yersinia pestis strains Antiqua and Nepal516: evidence of gene reduction in an emerging pathogen.</title>
        <authorList>
            <person name="Chain P.S.G."/>
            <person name="Hu P."/>
            <person name="Malfatti S.A."/>
            <person name="Radnedge L."/>
            <person name="Larimer F."/>
            <person name="Vergez L.M."/>
            <person name="Worsham P."/>
            <person name="Chu M.C."/>
            <person name="Andersen G.L."/>
        </authorList>
    </citation>
    <scope>NUCLEOTIDE SEQUENCE [LARGE SCALE GENOMIC DNA]</scope>
    <source>
        <strain>Antiqua</strain>
    </source>
</reference>
<name>RL6_YERPA</name>
<feature type="chain" id="PRO_0000265314" description="Large ribosomal subunit protein uL6">
    <location>
        <begin position="1"/>
        <end position="177"/>
    </location>
</feature>
<comment type="function">
    <text evidence="1">This protein binds to the 23S rRNA, and is important in its secondary structure. It is located near the subunit interface in the base of the L7/L12 stalk, and near the tRNA binding site of the peptidyltransferase center.</text>
</comment>
<comment type="subunit">
    <text evidence="1">Part of the 50S ribosomal subunit.</text>
</comment>
<comment type="similarity">
    <text evidence="1">Belongs to the universal ribosomal protein uL6 family.</text>
</comment>